<dbReference type="EMBL" id="BC087996">
    <property type="protein sequence ID" value="AAH87996.1"/>
    <property type="molecule type" value="mRNA"/>
</dbReference>
<dbReference type="RefSeq" id="NP_001011282.1">
    <property type="nucleotide sequence ID" value="NM_001011282.1"/>
</dbReference>
<dbReference type="RefSeq" id="XP_031759201.1">
    <property type="nucleotide sequence ID" value="XM_031903341.1"/>
</dbReference>
<dbReference type="SMR" id="Q5M8J5"/>
<dbReference type="FunCoup" id="Q5M8J5">
    <property type="interactions" value="94"/>
</dbReference>
<dbReference type="STRING" id="8364.ENSXETP00000032857"/>
<dbReference type="MEROPS" id="I04.980"/>
<dbReference type="GlyCosmos" id="Q5M8J5">
    <property type="glycosylation" value="3 sites, No reported glycans"/>
</dbReference>
<dbReference type="PaxDb" id="8364-ENSXETP00000057493"/>
<dbReference type="DNASU" id="496735"/>
<dbReference type="GeneID" id="496735"/>
<dbReference type="KEGG" id="xtr:496735"/>
<dbReference type="AGR" id="Xenbase:XB-GENE-5802997"/>
<dbReference type="CTD" id="5268"/>
<dbReference type="Xenbase" id="XB-GENE-5802997">
    <property type="gene designation" value="serpinb5"/>
</dbReference>
<dbReference type="eggNOG" id="KOG2392">
    <property type="taxonomic scope" value="Eukaryota"/>
</dbReference>
<dbReference type="HOGENOM" id="CLU_023330_0_2_1"/>
<dbReference type="InParanoid" id="Q5M8J5"/>
<dbReference type="OMA" id="FITNWMK"/>
<dbReference type="OrthoDB" id="671595at2759"/>
<dbReference type="PhylomeDB" id="Q5M8J5"/>
<dbReference type="TreeFam" id="TF352619"/>
<dbReference type="Proteomes" id="UP000008143">
    <property type="component" value="Chromosome 6"/>
</dbReference>
<dbReference type="Bgee" id="ENSXETG00000027590">
    <property type="expression patterns" value="Expressed in skin of body and 2 other cell types or tissues"/>
</dbReference>
<dbReference type="GO" id="GO:0005615">
    <property type="term" value="C:extracellular space"/>
    <property type="evidence" value="ECO:0007669"/>
    <property type="project" value="InterPro"/>
</dbReference>
<dbReference type="GO" id="GO:0004867">
    <property type="term" value="F:serine-type endopeptidase inhibitor activity"/>
    <property type="evidence" value="ECO:0007669"/>
    <property type="project" value="InterPro"/>
</dbReference>
<dbReference type="CDD" id="cd02057">
    <property type="entry name" value="serpinB5_maspin"/>
    <property type="match status" value="1"/>
</dbReference>
<dbReference type="FunFam" id="2.30.39.10:FF:000014">
    <property type="entry name" value="Serpin family B member 9"/>
    <property type="match status" value="1"/>
</dbReference>
<dbReference type="Gene3D" id="2.30.39.10">
    <property type="entry name" value="Alpha-1-antitrypsin, domain 1"/>
    <property type="match status" value="1"/>
</dbReference>
<dbReference type="Gene3D" id="3.30.497.10">
    <property type="entry name" value="Antithrombin, subunit I, domain 2"/>
    <property type="match status" value="1"/>
</dbReference>
<dbReference type="InterPro" id="IPR000240">
    <property type="entry name" value="Serpin_B9/Maspin"/>
</dbReference>
<dbReference type="InterPro" id="IPR023795">
    <property type="entry name" value="Serpin_CS"/>
</dbReference>
<dbReference type="InterPro" id="IPR023796">
    <property type="entry name" value="Serpin_dom"/>
</dbReference>
<dbReference type="InterPro" id="IPR000215">
    <property type="entry name" value="Serpin_fam"/>
</dbReference>
<dbReference type="InterPro" id="IPR036186">
    <property type="entry name" value="Serpin_sf"/>
</dbReference>
<dbReference type="InterPro" id="IPR042178">
    <property type="entry name" value="Serpin_sf_1"/>
</dbReference>
<dbReference type="InterPro" id="IPR042185">
    <property type="entry name" value="Serpin_sf_2"/>
</dbReference>
<dbReference type="InterPro" id="IPR033836">
    <property type="entry name" value="SERPINB5_serpin_dom"/>
</dbReference>
<dbReference type="PANTHER" id="PTHR11461">
    <property type="entry name" value="SERINE PROTEASE INHIBITOR, SERPIN"/>
    <property type="match status" value="1"/>
</dbReference>
<dbReference type="PANTHER" id="PTHR11461:SF55">
    <property type="entry name" value="SERPIN B5"/>
    <property type="match status" value="1"/>
</dbReference>
<dbReference type="Pfam" id="PF00079">
    <property type="entry name" value="Serpin"/>
    <property type="match status" value="1"/>
</dbReference>
<dbReference type="PRINTS" id="PR00676">
    <property type="entry name" value="MASPIN"/>
</dbReference>
<dbReference type="SMART" id="SM00093">
    <property type="entry name" value="SERPIN"/>
    <property type="match status" value="1"/>
</dbReference>
<dbReference type="SUPFAM" id="SSF56574">
    <property type="entry name" value="Serpins"/>
    <property type="match status" value="1"/>
</dbReference>
<dbReference type="PROSITE" id="PS00284">
    <property type="entry name" value="SERPIN"/>
    <property type="match status" value="1"/>
</dbReference>
<gene>
    <name type="primary">serpinb5</name>
</gene>
<name>SPB5_XENTR</name>
<evidence type="ECO:0000250" key="1"/>
<evidence type="ECO:0000255" key="2"/>
<evidence type="ECO:0000305" key="3"/>
<reference key="1">
    <citation type="submission" date="2004-12" db="EMBL/GenBank/DDBJ databases">
        <authorList>
            <consortium name="NIH - Xenopus Gene Collection (XGC) project"/>
        </authorList>
    </citation>
    <scope>NUCLEOTIDE SEQUENCE [LARGE SCALE MRNA]</scope>
</reference>
<proteinExistence type="evidence at transcript level"/>
<comment type="function">
    <text evidence="1">May not exhibit serine protease inhibitory activity.</text>
</comment>
<comment type="subcellular location">
    <subcellularLocation>
        <location>Secreted</location>
        <location>Extracellular space</location>
    </subcellularLocation>
</comment>
<comment type="similarity">
    <text evidence="3">Belongs to the serpin family. Ov-serpin subfamily.</text>
</comment>
<keyword id="KW-0325">Glycoprotein</keyword>
<keyword id="KW-1185">Reference proteome</keyword>
<keyword id="KW-0964">Secreted</keyword>
<organism>
    <name type="scientific">Xenopus tropicalis</name>
    <name type="common">Western clawed frog</name>
    <name type="synonym">Silurana tropicalis</name>
    <dbReference type="NCBI Taxonomy" id="8364"/>
    <lineage>
        <taxon>Eukaryota</taxon>
        <taxon>Metazoa</taxon>
        <taxon>Chordata</taxon>
        <taxon>Craniata</taxon>
        <taxon>Vertebrata</taxon>
        <taxon>Euteleostomi</taxon>
        <taxon>Amphibia</taxon>
        <taxon>Batrachia</taxon>
        <taxon>Anura</taxon>
        <taxon>Pipoidea</taxon>
        <taxon>Pipidae</taxon>
        <taxon>Xenopodinae</taxon>
        <taxon>Xenopus</taxon>
        <taxon>Silurana</taxon>
    </lineage>
</organism>
<feature type="chain" id="PRO_0000372430" description="Serpin B5">
    <location>
        <begin position="1"/>
        <end position="379"/>
    </location>
</feature>
<feature type="glycosylation site" description="N-linked (GlcNAc...) asparagine" evidence="2">
    <location>
        <position position="133"/>
    </location>
</feature>
<feature type="glycosylation site" description="N-linked (GlcNAc...) asparagine" evidence="2">
    <location>
        <position position="176"/>
    </location>
</feature>
<feature type="glycosylation site" description="N-linked (GlcNAc...) asparagine" evidence="2">
    <location>
        <position position="361"/>
    </location>
</feature>
<protein>
    <recommendedName>
        <fullName>Serpin B5</fullName>
    </recommendedName>
</protein>
<sequence length="379" mass="42907">MDALRLANTALAVDIFKKLCEKSATDNFVCSPLCISSSLSLIRKGSQGNTASELEKALHFEKVKDPDFGFQLLSSDISKISSANSLKLLKRVYVDNSIECKKDFINSAKKPYPLELETIDFKSQAEEARTQINSSVKELTDGNFETVLNEGSCDENTKIIMLGAASFKGKWVYTFNKSETKEMDFHINKKETKPVQMMHLEARLSIGYINELKTMVLEMPFQSKHFSMLILLPKDIEDDSTGLKKLEQDMTFEKYTHWTNPSMMANSKVKVSLPKFKMENSYDLKDMLKSLGINDAFNEEASDFSEMTESKGISISQAIQKACIEVDEDGTESADVSMERRLMNKEEFLADHPFIYILRHNKTRTIIMLGRYCGPSEAS</sequence>
<accession>Q5M8J5</accession>